<name>COBD_KLEP7</name>
<proteinExistence type="inferred from homology"/>
<organism>
    <name type="scientific">Klebsiella pneumoniae subsp. pneumoniae (strain ATCC 700721 / MGH 78578)</name>
    <dbReference type="NCBI Taxonomy" id="272620"/>
    <lineage>
        <taxon>Bacteria</taxon>
        <taxon>Pseudomonadati</taxon>
        <taxon>Pseudomonadota</taxon>
        <taxon>Gammaproteobacteria</taxon>
        <taxon>Enterobacterales</taxon>
        <taxon>Enterobacteriaceae</taxon>
        <taxon>Klebsiella/Raoultella group</taxon>
        <taxon>Klebsiella</taxon>
        <taxon>Klebsiella pneumoniae complex</taxon>
    </lineage>
</organism>
<evidence type="ECO:0000255" key="1">
    <source>
        <dbReference type="HAMAP-Rule" id="MF_00024"/>
    </source>
</evidence>
<gene>
    <name evidence="1" type="primary">cobD</name>
    <name type="ordered locus">KPN78578_31360</name>
    <name type="ORF">KPN_03199</name>
</gene>
<protein>
    <recommendedName>
        <fullName evidence="1">Cobalamin biosynthesis protein CobD</fullName>
    </recommendedName>
</protein>
<reference key="1">
    <citation type="submission" date="2006-09" db="EMBL/GenBank/DDBJ databases">
        <authorList>
            <consortium name="The Klebsiella pneumonia Genome Sequencing Project"/>
            <person name="McClelland M."/>
            <person name="Sanderson E.K."/>
            <person name="Spieth J."/>
            <person name="Clifton W.S."/>
            <person name="Latreille P."/>
            <person name="Sabo A."/>
            <person name="Pepin K."/>
            <person name="Bhonagiri V."/>
            <person name="Porwollik S."/>
            <person name="Ali J."/>
            <person name="Wilson R.K."/>
        </authorList>
    </citation>
    <scope>NUCLEOTIDE SEQUENCE [LARGE SCALE GENOMIC DNA]</scope>
    <source>
        <strain>ATCC 700721 / MGH 78578</strain>
    </source>
</reference>
<keyword id="KW-1003">Cell membrane</keyword>
<keyword id="KW-0169">Cobalamin biosynthesis</keyword>
<keyword id="KW-0472">Membrane</keyword>
<keyword id="KW-0812">Transmembrane</keyword>
<keyword id="KW-1133">Transmembrane helix</keyword>
<accession>A6TDC6</accession>
<comment type="function">
    <text evidence="1">Converts cobyric acid to cobinamide by the addition of aminopropanol on the F carboxylic group.</text>
</comment>
<comment type="pathway">
    <text evidence="1">Cofactor biosynthesis; adenosylcobalamin biosynthesis.</text>
</comment>
<comment type="subcellular location">
    <subcellularLocation>
        <location evidence="1">Cell membrane</location>
        <topology evidence="1">Multi-pass membrane protein</topology>
    </subcellularLocation>
</comment>
<comment type="similarity">
    <text evidence="1">Belongs to the CobD/CbiB family.</text>
</comment>
<feature type="chain" id="PRO_1000071008" description="Cobalamin biosynthesis protein CobD">
    <location>
        <begin position="1"/>
        <end position="319"/>
    </location>
</feature>
<feature type="transmembrane region" description="Helical" evidence="1">
    <location>
        <begin position="56"/>
        <end position="76"/>
    </location>
</feature>
<feature type="transmembrane region" description="Helical" evidence="1">
    <location>
        <begin position="78"/>
        <end position="98"/>
    </location>
</feature>
<feature type="transmembrane region" description="Helical" evidence="1">
    <location>
        <begin position="153"/>
        <end position="173"/>
    </location>
</feature>
<feature type="transmembrane region" description="Helical" evidence="1">
    <location>
        <begin position="204"/>
        <end position="224"/>
    </location>
</feature>
<feature type="transmembrane region" description="Helical" evidence="1">
    <location>
        <begin position="296"/>
        <end position="316"/>
    </location>
</feature>
<sequence>MTLLAWCVAWILDVVIGDPPHWPHPVRWIGRLIAVSQRVVRRICHSDRALRIGGGVMWLVVIGLTWGVAWGVLALAHGIHPWLGWLVEVWMIFTALAGRCLAQSAMAVARPLQAGDLAESRHKLSWIVGRDTSQLQPAQINRAVVETVAENTVDGIIAPLFFLLLGGAPLAMAYKAVNTLDSMVGYKHEKYRAIGMVSARLDDVANFLPARLSWLLLSLAAVLCREDGARALRTGWRDRYQHSSPNCAWPEATVAGALGIRLGGPNDYFGQRVEKPWIGDAVRDIAVDDISRTIRLMWVASSLALALFIGVRYWLVGAA</sequence>
<dbReference type="EMBL" id="CP000647">
    <property type="protein sequence ID" value="ABR78597.1"/>
    <property type="molecule type" value="Genomic_DNA"/>
</dbReference>
<dbReference type="STRING" id="272620.KPN_03199"/>
<dbReference type="PaxDb" id="272620-KPN_03199"/>
<dbReference type="EnsemblBacteria" id="ABR78597">
    <property type="protein sequence ID" value="ABR78597"/>
    <property type="gene ID" value="KPN_03199"/>
</dbReference>
<dbReference type="KEGG" id="kpn:KPN_03199"/>
<dbReference type="HOGENOM" id="CLU_054212_0_0_6"/>
<dbReference type="UniPathway" id="UPA00148"/>
<dbReference type="Proteomes" id="UP000000265">
    <property type="component" value="Chromosome"/>
</dbReference>
<dbReference type="GO" id="GO:0005886">
    <property type="term" value="C:plasma membrane"/>
    <property type="evidence" value="ECO:0007669"/>
    <property type="project" value="UniProtKB-SubCell"/>
</dbReference>
<dbReference type="GO" id="GO:0015420">
    <property type="term" value="F:ABC-type vitamin B12 transporter activity"/>
    <property type="evidence" value="ECO:0007669"/>
    <property type="project" value="UniProtKB-UniRule"/>
</dbReference>
<dbReference type="GO" id="GO:0048472">
    <property type="term" value="F:threonine-phosphate decarboxylase activity"/>
    <property type="evidence" value="ECO:0007669"/>
    <property type="project" value="InterPro"/>
</dbReference>
<dbReference type="GO" id="GO:0009236">
    <property type="term" value="P:cobalamin biosynthetic process"/>
    <property type="evidence" value="ECO:0007669"/>
    <property type="project" value="UniProtKB-UniRule"/>
</dbReference>
<dbReference type="HAMAP" id="MF_00024">
    <property type="entry name" value="CobD_CbiB"/>
    <property type="match status" value="1"/>
</dbReference>
<dbReference type="InterPro" id="IPR004485">
    <property type="entry name" value="Cobalamin_biosynth_CobD/CbiB"/>
</dbReference>
<dbReference type="NCBIfam" id="TIGR00380">
    <property type="entry name" value="cobal_cbiB"/>
    <property type="match status" value="1"/>
</dbReference>
<dbReference type="PANTHER" id="PTHR34308">
    <property type="entry name" value="COBALAMIN BIOSYNTHESIS PROTEIN CBIB"/>
    <property type="match status" value="1"/>
</dbReference>
<dbReference type="PANTHER" id="PTHR34308:SF1">
    <property type="entry name" value="COBALAMIN BIOSYNTHESIS PROTEIN CBIB"/>
    <property type="match status" value="1"/>
</dbReference>
<dbReference type="Pfam" id="PF03186">
    <property type="entry name" value="CobD_Cbib"/>
    <property type="match status" value="1"/>
</dbReference>